<sequence length="326" mass="37823">MSHQLTFADSEFSSKRRQTRKEIFLSRMEQILPWQNMVEVIEPFYPKAGNGRRPYPLETMLRIHCMQHWYNLSDGAMEDALYEIASMRLFARLSLDSALPDRTTIMNFRHLLEQHQLARQLFKTINRWLAEAGVMMTQGTLVDATIIEAPSSTKNKEQQRDPEMHQTKKGNQWHFGMKAHIGVDAKSGLTHSLVTTAANEHDLNQLGNLLHGEEQFVSADAGYQGAPQREELAEVDVDWLIAERPGKVRTLKQHPRKNKTAINIEYMKASIRAKVEHPFRIIKRQFGFVKARYKGLLKNDNQLAMLFTLANLFRADQMIRQWERSH</sequence>
<evidence type="ECO:0000305" key="1"/>
<accession>P0CE53</accession>
<accession>O07987</accession>
<accession>O07988</accession>
<accession>P03837</accession>
<accession>P76355</accession>
<accession>Q2MBK1</accession>
<accession>Q2MBM8</accession>
<proteinExistence type="inferred from homology"/>
<gene>
    <name type="primary">insH6</name>
    <name type="ordered locus">b1994</name>
    <name type="ordered locus">JW1972</name>
</gene>
<organism>
    <name type="scientific">Escherichia coli (strain K12)</name>
    <dbReference type="NCBI Taxonomy" id="83333"/>
    <lineage>
        <taxon>Bacteria</taxon>
        <taxon>Pseudomonadati</taxon>
        <taxon>Pseudomonadota</taxon>
        <taxon>Gammaproteobacteria</taxon>
        <taxon>Enterobacterales</taxon>
        <taxon>Enterobacteriaceae</taxon>
        <taxon>Escherichia</taxon>
    </lineage>
</organism>
<reference key="1">
    <citation type="journal article" date="1994" name="Nucleic Acids Res.">
        <title>Analysis of the Escherichia coli genome. V. DNA sequence of the region from 76.0 to 81.5 minutes.</title>
        <authorList>
            <person name="Sofia H.J."/>
            <person name="Burland V."/>
            <person name="Daniels D.L."/>
            <person name="Plunkett G. III"/>
            <person name="Blattner F.R."/>
        </authorList>
    </citation>
    <scope>NUCLEOTIDE SEQUENCE [LARGE SCALE GENOMIC DNA]</scope>
    <source>
        <strain>K12 / MG1655 / ATCC 47076</strain>
    </source>
</reference>
<reference key="2">
    <citation type="journal article" date="1996" name="DNA Res.">
        <title>A 570-kb DNA sequence of the Escherichia coli K-12 genome corresponding to the 28.0-40.1 min region on the linkage map.</title>
        <authorList>
            <person name="Aiba H."/>
            <person name="Baba T."/>
            <person name="Fujita K."/>
            <person name="Hayashi K."/>
            <person name="Inada T."/>
            <person name="Isono K."/>
            <person name="Itoh T."/>
            <person name="Kasai H."/>
            <person name="Kashimoto K."/>
            <person name="Kimura S."/>
            <person name="Kitakawa M."/>
            <person name="Kitagawa M."/>
            <person name="Makino K."/>
            <person name="Miki T."/>
            <person name="Mizobuchi K."/>
            <person name="Mori H."/>
            <person name="Mori T."/>
            <person name="Motomura K."/>
            <person name="Nakade S."/>
            <person name="Nakamura Y."/>
            <person name="Nashimoto H."/>
            <person name="Nishio Y."/>
            <person name="Oshima T."/>
            <person name="Saito N."/>
            <person name="Sampei G."/>
            <person name="Seki Y."/>
            <person name="Sivasundaram S."/>
            <person name="Tagami H."/>
            <person name="Takeda J."/>
            <person name="Takemoto K."/>
            <person name="Takeuchi Y."/>
            <person name="Wada C."/>
            <person name="Yamamoto Y."/>
            <person name="Horiuchi T."/>
        </authorList>
    </citation>
    <scope>NUCLEOTIDE SEQUENCE [LARGE SCALE GENOMIC DNA]</scope>
    <source>
        <strain>K12 / W3110 / ATCC 27325 / DSM 5911</strain>
    </source>
</reference>
<reference key="3">
    <citation type="journal article" date="1996" name="DNA Res.">
        <title>A 460-kb DNA sequence of the Escherichia coli K-12 genome corresponding to the 40.1-50.0 min region on the linkage map.</title>
        <authorList>
            <person name="Itoh T."/>
            <person name="Aiba H."/>
            <person name="Baba T."/>
            <person name="Fujita K."/>
            <person name="Hayashi K."/>
            <person name="Inada T."/>
            <person name="Isono K."/>
            <person name="Kasai H."/>
            <person name="Kimura S."/>
            <person name="Kitakawa M."/>
            <person name="Kitagawa M."/>
            <person name="Makino K."/>
            <person name="Miki T."/>
            <person name="Mizobuchi K."/>
            <person name="Mori H."/>
            <person name="Mori T."/>
            <person name="Motomura K."/>
            <person name="Nakade S."/>
            <person name="Nakamura Y."/>
            <person name="Nashimoto H."/>
            <person name="Nishio Y."/>
            <person name="Oshima T."/>
            <person name="Saito N."/>
            <person name="Sampei G."/>
            <person name="Seki Y."/>
            <person name="Sivasundaram S."/>
            <person name="Tagami H."/>
            <person name="Takeda J."/>
            <person name="Takemoto K."/>
            <person name="Wada C."/>
            <person name="Yamamoto Y."/>
            <person name="Horiuchi T."/>
        </authorList>
    </citation>
    <scope>NUCLEOTIDE SEQUENCE [LARGE SCALE GENOMIC DNA]</scope>
    <source>
        <strain>K12 / W3110 / ATCC 27325 / DSM 5911</strain>
    </source>
</reference>
<reference key="4">
    <citation type="submission" date="1997-01" db="EMBL/GenBank/DDBJ databases">
        <title>Sequence of minutes 4-25 of Escherichia coli.</title>
        <authorList>
            <person name="Chung E."/>
            <person name="Allen E."/>
            <person name="Araujo R."/>
            <person name="Aparicio A.M."/>
            <person name="Davis K."/>
            <person name="Duncan M."/>
            <person name="Federspiel N."/>
            <person name="Hyman R."/>
            <person name="Kalman S."/>
            <person name="Komp C."/>
            <person name="Kurdi O."/>
            <person name="Lew H."/>
            <person name="Lin D."/>
            <person name="Namath A."/>
            <person name="Oefner P."/>
            <person name="Roberts D."/>
            <person name="Schramm S."/>
            <person name="Davis R.W."/>
        </authorList>
    </citation>
    <scope>NUCLEOTIDE SEQUENCE [LARGE SCALE GENOMIC DNA]</scope>
    <source>
        <strain>K12 / MG1655 / ATCC 47076</strain>
    </source>
</reference>
<reference key="5">
    <citation type="journal article" date="1997" name="Science">
        <title>The complete genome sequence of Escherichia coli K-12.</title>
        <authorList>
            <person name="Blattner F.R."/>
            <person name="Plunkett G. III"/>
            <person name="Bloch C.A."/>
            <person name="Perna N.T."/>
            <person name="Burland V."/>
            <person name="Riley M."/>
            <person name="Collado-Vides J."/>
            <person name="Glasner J.D."/>
            <person name="Rode C.K."/>
            <person name="Mayhew G.F."/>
            <person name="Gregor J."/>
            <person name="Davis N.W."/>
            <person name="Kirkpatrick H.A."/>
            <person name="Goeden M.A."/>
            <person name="Rose D.J."/>
            <person name="Mau B."/>
            <person name="Shao Y."/>
        </authorList>
    </citation>
    <scope>NUCLEOTIDE SEQUENCE [LARGE SCALE GENOMIC DNA]</scope>
    <source>
        <strain>K12 / MG1655 / ATCC 47076</strain>
    </source>
</reference>
<reference key="6">
    <citation type="journal article" date="2006" name="Mol. Syst. Biol.">
        <title>Highly accurate genome sequences of Escherichia coli K-12 strains MG1655 and W3110.</title>
        <authorList>
            <person name="Hayashi K."/>
            <person name="Morooka N."/>
            <person name="Yamamoto Y."/>
            <person name="Fujita K."/>
            <person name="Isono K."/>
            <person name="Choi S."/>
            <person name="Ohtsubo E."/>
            <person name="Baba T."/>
            <person name="Wanner B.L."/>
            <person name="Mori H."/>
            <person name="Horiuchi T."/>
        </authorList>
    </citation>
    <scope>NUCLEOTIDE SEQUENCE [LARGE SCALE GENOMIC DNA]</scope>
    <source>
        <strain>K12 / W3110 / ATCC 27325 / DSM 5911</strain>
    </source>
</reference>
<name>INSH6_ECOLI</name>
<feature type="chain" id="PRO_0000392484" description="Transposase InsH for insertion sequence element IS5H">
    <location>
        <begin position="1"/>
        <end position="326"/>
    </location>
</feature>
<keyword id="KW-0233">DNA recombination</keyword>
<keyword id="KW-0238">DNA-binding</keyword>
<keyword id="KW-1185">Reference proteome</keyword>
<keyword id="KW-0814">Transposable element</keyword>
<keyword id="KW-0815">Transposition</keyword>
<comment type="function">
    <text>Involved in the transposition of the insertion sequence IS5.</text>
</comment>
<comment type="similarity">
    <text evidence="1">Belongs to the transposase 11 family.</text>
</comment>
<comment type="sequence caution" evidence="1">
    <conflict type="erroneous initiation">
        <sequence resource="EMBL-CDS" id="BAA15811"/>
    </conflict>
    <text>Extended N-terminus.</text>
</comment>
<protein>
    <recommendedName>
        <fullName>Transposase InsH for insertion sequence element IS5H</fullName>
    </recommendedName>
</protein>
<dbReference type="EMBL" id="U00096">
    <property type="protein sequence ID" value="AAC75055.2"/>
    <property type="molecule type" value="Genomic_DNA"/>
</dbReference>
<dbReference type="EMBL" id="AP009048">
    <property type="protein sequence ID" value="BAA15811.1"/>
    <property type="status" value="ALT_INIT"/>
    <property type="molecule type" value="Genomic_DNA"/>
</dbReference>
<dbReference type="RefSeq" id="NP_416498.1">
    <property type="nucleotide sequence ID" value="NC_000913.3"/>
</dbReference>
<dbReference type="RefSeq" id="WP_000019402.1">
    <property type="nucleotide sequence ID" value="NZ_LN832404.1"/>
</dbReference>
<dbReference type="FunCoup" id="P0CE53">
    <property type="interactions" value="11"/>
</dbReference>
<dbReference type="STRING" id="511145.b1994"/>
<dbReference type="jPOST" id="P0CE53"/>
<dbReference type="PaxDb" id="511145-b1994"/>
<dbReference type="EnsemblBacteria" id="AAC75055">
    <property type="protein sequence ID" value="AAC75055"/>
    <property type="gene ID" value="b1994"/>
</dbReference>
<dbReference type="GeneID" id="946507"/>
<dbReference type="KEGG" id="ecj:JW1972"/>
<dbReference type="KEGG" id="eco:b1994"/>
<dbReference type="KEGG" id="ecoc:C3026_11250"/>
<dbReference type="PATRIC" id="fig|511145.12.peg.2070"/>
<dbReference type="EchoBASE" id="EB4730"/>
<dbReference type="eggNOG" id="COG3039">
    <property type="taxonomic scope" value="Bacteria"/>
</dbReference>
<dbReference type="HOGENOM" id="CLU_049873_1_2_6"/>
<dbReference type="InParanoid" id="P0CE53"/>
<dbReference type="PhylomeDB" id="P0CE53"/>
<dbReference type="BioCyc" id="EcoCyc:G7074-MONOMER"/>
<dbReference type="PRO" id="PR:P0CE53"/>
<dbReference type="Proteomes" id="UP000000625">
    <property type="component" value="Chromosome"/>
</dbReference>
<dbReference type="GO" id="GO:0005829">
    <property type="term" value="C:cytosol"/>
    <property type="evidence" value="ECO:0000318"/>
    <property type="project" value="GO_Central"/>
</dbReference>
<dbReference type="GO" id="GO:0003677">
    <property type="term" value="F:DNA binding"/>
    <property type="evidence" value="ECO:0007669"/>
    <property type="project" value="UniProtKB-KW"/>
</dbReference>
<dbReference type="GO" id="GO:0004803">
    <property type="term" value="F:transposase activity"/>
    <property type="evidence" value="ECO:0000314"/>
    <property type="project" value="EcoCyc"/>
</dbReference>
<dbReference type="GO" id="GO:0006313">
    <property type="term" value="P:DNA transposition"/>
    <property type="evidence" value="ECO:0000314"/>
    <property type="project" value="EcoCyc"/>
</dbReference>
<dbReference type="InterPro" id="IPR047959">
    <property type="entry name" value="Transpos_IS5"/>
</dbReference>
<dbReference type="InterPro" id="IPR002559">
    <property type="entry name" value="Transposase_11"/>
</dbReference>
<dbReference type="InterPro" id="IPR008490">
    <property type="entry name" value="Transposase_InsH_N"/>
</dbReference>
<dbReference type="NCBIfam" id="NF033581">
    <property type="entry name" value="transpos_IS5_4"/>
    <property type="match status" value="1"/>
</dbReference>
<dbReference type="PANTHER" id="PTHR35604">
    <property type="entry name" value="TRANSPOSASE INSH FOR INSERTION SEQUENCE ELEMENT IS5A-RELATED"/>
    <property type="match status" value="1"/>
</dbReference>
<dbReference type="PANTHER" id="PTHR35604:SF2">
    <property type="entry name" value="TRANSPOSASE INSH FOR INSERTION SEQUENCE ELEMENT IS5A-RELATED"/>
    <property type="match status" value="1"/>
</dbReference>
<dbReference type="Pfam" id="PF01609">
    <property type="entry name" value="DDE_Tnp_1"/>
    <property type="match status" value="1"/>
</dbReference>
<dbReference type="Pfam" id="PF05598">
    <property type="entry name" value="DUF772"/>
    <property type="match status" value="1"/>
</dbReference>